<proteinExistence type="evidence at protein level"/>
<name>CKB21_ORYSJ</name>
<sequence>MAALHHQAAAAPVTTTTDGGELRAMDLYEKLEKVGEGTYGKVYKAREKATGRIVALKKTRLPEDDEGVPPTALREVSLLRMLSQDSHVVRLLDLKQGQNKEGQTILYLVFEYMDTDLKKFIRAHRQNLQKIPVPTVKILMYQLCKGVAFCHGRGVLHRDLKPHNLLMDRKTMALKIADLGLSRSFTVPLKKYTHEILTLWYRAPEVLLGAAHYSTPVDIWSVGCIFAELATNQPLFAGDSEVQQLLHIFKLLGTPNEQVWPGVSKLPNWHEYPQWNPSKVSDLVHGLDADALDLLEKMLQYEPSKRISAKKAMEHPYFNDVNKELY</sequence>
<evidence type="ECO:0000250" key="1"/>
<evidence type="ECO:0000255" key="2">
    <source>
        <dbReference type="PROSITE-ProRule" id="PRU00159"/>
    </source>
</evidence>
<evidence type="ECO:0000255" key="3">
    <source>
        <dbReference type="PROSITE-ProRule" id="PRU10027"/>
    </source>
</evidence>
<evidence type="ECO:0000269" key="4">
    <source>
    </source>
</evidence>
<evidence type="ECO:0000269" key="5">
    <source>
    </source>
</evidence>
<evidence type="ECO:0000269" key="6">
    <source>
    </source>
</evidence>
<evidence type="ECO:0000269" key="7">
    <source>
    </source>
</evidence>
<evidence type="ECO:0000305" key="8"/>
<evidence type="ECO:0000312" key="9">
    <source>
        <dbReference type="EMBL" id="EEE68985.1"/>
    </source>
</evidence>
<protein>
    <recommendedName>
        <fullName>Cyclin-dependent kinase B2-1</fullName>
        <shortName>CDKB2;1</shortName>
        <shortName>CDKB;2</shortName>
        <ecNumber>2.7.11.22</ecNumber>
        <ecNumber>2.7.11.23</ecNumber>
    </recommendedName>
    <alternativeName>
        <fullName>CDC2Os-3</fullName>
    </alternativeName>
</protein>
<keyword id="KW-0067">ATP-binding</keyword>
<keyword id="KW-0131">Cell cycle</keyword>
<keyword id="KW-0132">Cell division</keyword>
<keyword id="KW-0963">Cytoplasm</keyword>
<keyword id="KW-0206">Cytoskeleton</keyword>
<keyword id="KW-0418">Kinase</keyword>
<keyword id="KW-0498">Mitosis</keyword>
<keyword id="KW-0547">Nucleotide-binding</keyword>
<keyword id="KW-0539">Nucleus</keyword>
<keyword id="KW-0597">Phosphoprotein</keyword>
<keyword id="KW-1185">Reference proteome</keyword>
<keyword id="KW-0723">Serine/threonine-protein kinase</keyword>
<keyword id="KW-0808">Transferase</keyword>
<reference key="1">
    <citation type="journal article" date="2005" name="Nature">
        <title>The map-based sequence of the rice genome.</title>
        <authorList>
            <consortium name="International rice genome sequencing project (IRGSP)"/>
        </authorList>
    </citation>
    <scope>NUCLEOTIDE SEQUENCE [LARGE SCALE GENOMIC DNA]</scope>
    <source>
        <strain>cv. Nipponbare</strain>
    </source>
</reference>
<reference key="2">
    <citation type="journal article" date="2008" name="Nucleic Acids Res.">
        <title>The rice annotation project database (RAP-DB): 2008 update.</title>
        <authorList>
            <consortium name="The rice annotation project (RAP)"/>
        </authorList>
    </citation>
    <scope>GENOME REANNOTATION</scope>
    <source>
        <strain>cv. Nipponbare</strain>
    </source>
</reference>
<reference key="3">
    <citation type="journal article" date="2013" name="Rice">
        <title>Improvement of the Oryza sativa Nipponbare reference genome using next generation sequence and optical map data.</title>
        <authorList>
            <person name="Kawahara Y."/>
            <person name="de la Bastide M."/>
            <person name="Hamilton J.P."/>
            <person name="Kanamori H."/>
            <person name="McCombie W.R."/>
            <person name="Ouyang S."/>
            <person name="Schwartz D.C."/>
            <person name="Tanaka T."/>
            <person name="Wu J."/>
            <person name="Zhou S."/>
            <person name="Childs K.L."/>
            <person name="Davidson R.M."/>
            <person name="Lin H."/>
            <person name="Quesada-Ocampo L."/>
            <person name="Vaillancourt B."/>
            <person name="Sakai H."/>
            <person name="Lee S.S."/>
            <person name="Kim J."/>
            <person name="Numa H."/>
            <person name="Itoh T."/>
            <person name="Buell C.R."/>
            <person name="Matsumoto T."/>
        </authorList>
    </citation>
    <scope>GENOME REANNOTATION</scope>
    <source>
        <strain>cv. Nipponbare</strain>
    </source>
</reference>
<reference key="4">
    <citation type="journal article" date="2005" name="PLoS Biol.">
        <title>The genomes of Oryza sativa: a history of duplications.</title>
        <authorList>
            <person name="Yu J."/>
            <person name="Wang J."/>
            <person name="Lin W."/>
            <person name="Li S."/>
            <person name="Li H."/>
            <person name="Zhou J."/>
            <person name="Ni P."/>
            <person name="Dong W."/>
            <person name="Hu S."/>
            <person name="Zeng C."/>
            <person name="Zhang J."/>
            <person name="Zhang Y."/>
            <person name="Li R."/>
            <person name="Xu Z."/>
            <person name="Li S."/>
            <person name="Li X."/>
            <person name="Zheng H."/>
            <person name="Cong L."/>
            <person name="Lin L."/>
            <person name="Yin J."/>
            <person name="Geng J."/>
            <person name="Li G."/>
            <person name="Shi J."/>
            <person name="Liu J."/>
            <person name="Lv H."/>
            <person name="Li J."/>
            <person name="Wang J."/>
            <person name="Deng Y."/>
            <person name="Ran L."/>
            <person name="Shi X."/>
            <person name="Wang X."/>
            <person name="Wu Q."/>
            <person name="Li C."/>
            <person name="Ren X."/>
            <person name="Wang J."/>
            <person name="Wang X."/>
            <person name="Li D."/>
            <person name="Liu D."/>
            <person name="Zhang X."/>
            <person name="Ji Z."/>
            <person name="Zhao W."/>
            <person name="Sun Y."/>
            <person name="Zhang Z."/>
            <person name="Bao J."/>
            <person name="Han Y."/>
            <person name="Dong L."/>
            <person name="Ji J."/>
            <person name="Chen P."/>
            <person name="Wu S."/>
            <person name="Liu J."/>
            <person name="Xiao Y."/>
            <person name="Bu D."/>
            <person name="Tan J."/>
            <person name="Yang L."/>
            <person name="Ye C."/>
            <person name="Zhang J."/>
            <person name="Xu J."/>
            <person name="Zhou Y."/>
            <person name="Yu Y."/>
            <person name="Zhang B."/>
            <person name="Zhuang S."/>
            <person name="Wei H."/>
            <person name="Liu B."/>
            <person name="Lei M."/>
            <person name="Yu H."/>
            <person name="Li Y."/>
            <person name="Xu H."/>
            <person name="Wei S."/>
            <person name="He X."/>
            <person name="Fang L."/>
            <person name="Zhang Z."/>
            <person name="Zhang Y."/>
            <person name="Huang X."/>
            <person name="Su Z."/>
            <person name="Tong W."/>
            <person name="Li J."/>
            <person name="Tong Z."/>
            <person name="Li S."/>
            <person name="Ye J."/>
            <person name="Wang L."/>
            <person name="Fang L."/>
            <person name="Lei T."/>
            <person name="Chen C.-S."/>
            <person name="Chen H.-C."/>
            <person name="Xu Z."/>
            <person name="Li H."/>
            <person name="Huang H."/>
            <person name="Zhang F."/>
            <person name="Xu H."/>
            <person name="Li N."/>
            <person name="Zhao C."/>
            <person name="Li S."/>
            <person name="Dong L."/>
            <person name="Huang Y."/>
            <person name="Li L."/>
            <person name="Xi Y."/>
            <person name="Qi Q."/>
            <person name="Li W."/>
            <person name="Zhang B."/>
            <person name="Hu W."/>
            <person name="Zhang Y."/>
            <person name="Tian X."/>
            <person name="Jiao Y."/>
            <person name="Liang X."/>
            <person name="Jin J."/>
            <person name="Gao L."/>
            <person name="Zheng W."/>
            <person name="Hao B."/>
            <person name="Liu S.-M."/>
            <person name="Wang W."/>
            <person name="Yuan L."/>
            <person name="Cao M."/>
            <person name="McDermott J."/>
            <person name="Samudrala R."/>
            <person name="Wang J."/>
            <person name="Wong G.K.-S."/>
            <person name="Yang H."/>
        </authorList>
    </citation>
    <scope>NUCLEOTIDE SEQUENCE [LARGE SCALE GENOMIC DNA]</scope>
    <source>
        <strain>cv. Nipponbare</strain>
    </source>
</reference>
<reference key="5">
    <citation type="journal article" date="2003" name="Science">
        <title>Collection, mapping, and annotation of over 28,000 cDNA clones from japonica rice.</title>
        <authorList>
            <consortium name="The rice full-length cDNA consortium"/>
        </authorList>
    </citation>
    <scope>NUCLEOTIDE SEQUENCE [LARGE SCALE MRNA]</scope>
    <source>
        <strain>cv. Nipponbare</strain>
    </source>
</reference>
<reference key="6">
    <citation type="journal article" date="1994" name="DNA Seq.">
        <title>Nucleotide sequence of rice (oryza sativa L.) cDNA homologous to cdc2 gene.</title>
        <authorList>
            <person name="Kidou S."/>
            <person name="Umeda M."/>
            <person name="Uchimiya H."/>
        </authorList>
    </citation>
    <scope>NUCLEOTIDE SEQUENCE [MRNA] OF 3-326</scope>
    <source>
        <tissue>Callus</tissue>
    </source>
</reference>
<reference key="7">
    <citation type="journal article" date="1999" name="Plant Physiol.">
        <title>Differential expression of genes for cyclin-dependent protein kinases in rice plants.</title>
        <authorList>
            <person name="Umeda M."/>
            <person name="Umeda-Hara C."/>
            <person name="Yamaguchi M."/>
            <person name="Hashimoto J."/>
            <person name="Uchimiya H."/>
        </authorList>
    </citation>
    <scope>TISSUE SPECIFICITY</scope>
    <scope>DEVELOPMENTAL STAGE</scope>
    <scope>INDUCTION</scope>
</reference>
<reference key="8">
    <citation type="journal article" date="2000" name="Planta">
        <title>The cell cycle genes cycA1;1 and cdc2Os-3 are coordinately regulated by gibberellin in planta.</title>
        <authorList>
            <person name="Fabian T."/>
            <person name="Lorbiecke R."/>
            <person name="Umeda M."/>
            <person name="Sauter M."/>
        </authorList>
    </citation>
    <scope>FUNCTION</scope>
    <scope>TISSUE SPECIFICITY</scope>
    <scope>DEVELOPMENTAL STAGE</scope>
    <scope>INDUCTION</scope>
</reference>
<reference key="9">
    <citation type="journal article" date="2003" name="Plant J.">
        <title>Cell cycle function of a rice B2-type cyclin interacting with a B-type cyclin-dependent kinase.</title>
        <authorList>
            <person name="Lee J."/>
            <person name="Das A."/>
            <person name="Yamaguchi M."/>
            <person name="Hashimoto J."/>
            <person name="Tsutsumi N."/>
            <person name="Uchimiya H."/>
            <person name="Umeda M."/>
        </authorList>
    </citation>
    <scope>FUNCTION</scope>
    <scope>SUBCELLULAR LOCATION</scope>
    <scope>INTERACTION WITH CYCB2-1 AND CYCB2-2</scope>
</reference>
<reference key="10">
    <citation type="journal article" date="2007" name="Plant Mol. Biol.">
        <title>Genome-wide identification and expression analysis of rice cell cycle genes.</title>
        <authorList>
            <person name="Guo J."/>
            <person name="Song J."/>
            <person name="Wang F."/>
            <person name="Zhang X.S."/>
        </authorList>
    </citation>
    <scope>INDUCTION</scope>
    <scope>GENE FAMILY</scope>
</reference>
<accession>Q0J4I1</accession>
<accession>B9G1R8</accession>
<accession>Q40734</accession>
<accession>Q6Z8N6</accession>
<organism>
    <name type="scientific">Oryza sativa subsp. japonica</name>
    <name type="common">Rice</name>
    <dbReference type="NCBI Taxonomy" id="39947"/>
    <lineage>
        <taxon>Eukaryota</taxon>
        <taxon>Viridiplantae</taxon>
        <taxon>Streptophyta</taxon>
        <taxon>Embryophyta</taxon>
        <taxon>Tracheophyta</taxon>
        <taxon>Spermatophyta</taxon>
        <taxon>Magnoliopsida</taxon>
        <taxon>Liliopsida</taxon>
        <taxon>Poales</taxon>
        <taxon>Poaceae</taxon>
        <taxon>BOP clade</taxon>
        <taxon>Oryzoideae</taxon>
        <taxon>Oryzeae</taxon>
        <taxon>Oryzinae</taxon>
        <taxon>Oryza</taxon>
        <taxon>Oryza sativa</taxon>
    </lineage>
</organism>
<feature type="chain" id="PRO_0000296099" description="Cyclin-dependent kinase B2-1">
    <location>
        <begin position="1"/>
        <end position="326"/>
    </location>
</feature>
<feature type="domain" description="Protein kinase" evidence="2">
    <location>
        <begin position="28"/>
        <end position="318"/>
    </location>
</feature>
<feature type="active site" description="Proton acceptor" evidence="2 3">
    <location>
        <position position="159"/>
    </location>
</feature>
<feature type="binding site" evidence="2">
    <location>
        <begin position="34"/>
        <end position="42"/>
    </location>
    <ligand>
        <name>ATP</name>
        <dbReference type="ChEBI" id="CHEBI:30616"/>
    </ligand>
</feature>
<feature type="binding site" evidence="2">
    <location>
        <position position="57"/>
    </location>
    <ligand>
        <name>ATP</name>
        <dbReference type="ChEBI" id="CHEBI:30616"/>
    </ligand>
</feature>
<feature type="modified residue" description="Phosphothreonine" evidence="1">
    <location>
        <position position="38"/>
    </location>
</feature>
<feature type="modified residue" description="Phosphotyrosine" evidence="1">
    <location>
        <position position="39"/>
    </location>
</feature>
<feature type="modified residue" description="Phosphothreonine" evidence="1">
    <location>
        <position position="193"/>
    </location>
</feature>
<feature type="sequence conflict" description="In Ref. 5; AK059682." evidence="8" ref="5">
    <original>E</original>
    <variation>G</variation>
    <location>
        <position position="29"/>
    </location>
</feature>
<gene>
    <name type="primary">CDKB2-1</name>
    <name type="synonym">SS224</name>
    <name type="ordered locus">Os08g0512600</name>
    <name type="ordered locus">LOC_Os08g40170</name>
    <name evidence="9" type="ORF">OsJ_27911</name>
    <name type="ORF">P0711H09.13</name>
</gene>
<dbReference type="EC" id="2.7.11.22"/>
<dbReference type="EC" id="2.7.11.23"/>
<dbReference type="EMBL" id="AP004765">
    <property type="protein sequence ID" value="BAD10065.1"/>
    <property type="status" value="ALT_INIT"/>
    <property type="molecule type" value="Genomic_DNA"/>
</dbReference>
<dbReference type="EMBL" id="AP008214">
    <property type="protein sequence ID" value="BAF24134.1"/>
    <property type="molecule type" value="Genomic_DNA"/>
</dbReference>
<dbReference type="EMBL" id="AP014964">
    <property type="protein sequence ID" value="BAT06213.1"/>
    <property type="molecule type" value="Genomic_DNA"/>
</dbReference>
<dbReference type="EMBL" id="CM000145">
    <property type="protein sequence ID" value="EEE68985.1"/>
    <property type="molecule type" value="Genomic_DNA"/>
</dbReference>
<dbReference type="EMBL" id="AK059682">
    <property type="status" value="NOT_ANNOTATED_CDS"/>
    <property type="molecule type" value="mRNA"/>
</dbReference>
<dbReference type="EMBL" id="D64036">
    <property type="protein sequence ID" value="BAA19553.1"/>
    <property type="status" value="ALT_INIT"/>
    <property type="molecule type" value="mRNA"/>
</dbReference>
<dbReference type="PIR" id="T04109">
    <property type="entry name" value="T04109"/>
</dbReference>
<dbReference type="RefSeq" id="XP_015648777.1">
    <property type="nucleotide sequence ID" value="XM_015793291.1"/>
</dbReference>
<dbReference type="SMR" id="Q0J4I1"/>
<dbReference type="FunCoup" id="Q0J4I1">
    <property type="interactions" value="335"/>
</dbReference>
<dbReference type="STRING" id="39947.Q0J4I1"/>
<dbReference type="PaxDb" id="39947-Q0J4I1"/>
<dbReference type="EnsemblPlants" id="Os08t0512600-01">
    <property type="protein sequence ID" value="Os08t0512600-01"/>
    <property type="gene ID" value="Os08g0512600"/>
</dbReference>
<dbReference type="Gramene" id="Os08t0512600-01">
    <property type="protein sequence ID" value="Os08t0512600-01"/>
    <property type="gene ID" value="Os08g0512600"/>
</dbReference>
<dbReference type="KEGG" id="dosa:Os08g0512600"/>
<dbReference type="eggNOG" id="KOG0594">
    <property type="taxonomic scope" value="Eukaryota"/>
</dbReference>
<dbReference type="HOGENOM" id="CLU_000288_181_6_1"/>
<dbReference type="InParanoid" id="Q0J4I1"/>
<dbReference type="OMA" id="NWHEFPQ"/>
<dbReference type="OrthoDB" id="1732493at2759"/>
<dbReference type="Proteomes" id="UP000000763">
    <property type="component" value="Chromosome 8"/>
</dbReference>
<dbReference type="Proteomes" id="UP000007752">
    <property type="component" value="Chromosome 8"/>
</dbReference>
<dbReference type="Proteomes" id="UP000059680">
    <property type="component" value="Chromosome 8"/>
</dbReference>
<dbReference type="GO" id="GO:0000307">
    <property type="term" value="C:cyclin-dependent protein kinase holoenzyme complex"/>
    <property type="evidence" value="ECO:0000318"/>
    <property type="project" value="GO_Central"/>
</dbReference>
<dbReference type="GO" id="GO:0005737">
    <property type="term" value="C:cytoplasm"/>
    <property type="evidence" value="ECO:0000318"/>
    <property type="project" value="GO_Central"/>
</dbReference>
<dbReference type="GO" id="GO:0005634">
    <property type="term" value="C:nucleus"/>
    <property type="evidence" value="ECO:0000318"/>
    <property type="project" value="GO_Central"/>
</dbReference>
<dbReference type="GO" id="GO:0009524">
    <property type="term" value="C:phragmoplast"/>
    <property type="evidence" value="ECO:0007669"/>
    <property type="project" value="UniProtKB-SubCell"/>
</dbReference>
<dbReference type="GO" id="GO:0005819">
    <property type="term" value="C:spindle"/>
    <property type="evidence" value="ECO:0007669"/>
    <property type="project" value="UniProtKB-SubCell"/>
</dbReference>
<dbReference type="GO" id="GO:0005524">
    <property type="term" value="F:ATP binding"/>
    <property type="evidence" value="ECO:0007669"/>
    <property type="project" value="UniProtKB-KW"/>
</dbReference>
<dbReference type="GO" id="GO:0030332">
    <property type="term" value="F:cyclin binding"/>
    <property type="evidence" value="ECO:0000318"/>
    <property type="project" value="GO_Central"/>
</dbReference>
<dbReference type="GO" id="GO:0004693">
    <property type="term" value="F:cyclin-dependent protein serine/threonine kinase activity"/>
    <property type="evidence" value="ECO:0000318"/>
    <property type="project" value="GO_Central"/>
</dbReference>
<dbReference type="GO" id="GO:0106310">
    <property type="term" value="F:protein serine kinase activity"/>
    <property type="evidence" value="ECO:0007669"/>
    <property type="project" value="RHEA"/>
</dbReference>
<dbReference type="GO" id="GO:0008353">
    <property type="term" value="F:RNA polymerase II CTD heptapeptide repeat kinase activity"/>
    <property type="evidence" value="ECO:0007669"/>
    <property type="project" value="UniProtKB-EC"/>
</dbReference>
<dbReference type="GO" id="GO:0051301">
    <property type="term" value="P:cell division"/>
    <property type="evidence" value="ECO:0007669"/>
    <property type="project" value="UniProtKB-KW"/>
</dbReference>
<dbReference type="GO" id="GO:0000082">
    <property type="term" value="P:G1/S transition of mitotic cell cycle"/>
    <property type="evidence" value="ECO:0000318"/>
    <property type="project" value="GO_Central"/>
</dbReference>
<dbReference type="GO" id="GO:0010389">
    <property type="term" value="P:regulation of G2/M transition of mitotic cell cycle"/>
    <property type="evidence" value="ECO:0000318"/>
    <property type="project" value="GO_Central"/>
</dbReference>
<dbReference type="GO" id="GO:0010468">
    <property type="term" value="P:regulation of gene expression"/>
    <property type="evidence" value="ECO:0000318"/>
    <property type="project" value="GO_Central"/>
</dbReference>
<dbReference type="GO" id="GO:0007165">
    <property type="term" value="P:signal transduction"/>
    <property type="evidence" value="ECO:0000318"/>
    <property type="project" value="GO_Central"/>
</dbReference>
<dbReference type="FunFam" id="1.10.510.10:FF:000281">
    <property type="entry name" value="Cyclin-dependent kinase 2"/>
    <property type="match status" value="1"/>
</dbReference>
<dbReference type="FunFam" id="3.30.200.20:FF:000231">
    <property type="entry name" value="Cyclin-dependent kinase B2,2"/>
    <property type="match status" value="1"/>
</dbReference>
<dbReference type="Gene3D" id="3.30.200.20">
    <property type="entry name" value="Phosphorylase Kinase, domain 1"/>
    <property type="match status" value="1"/>
</dbReference>
<dbReference type="Gene3D" id="1.10.510.10">
    <property type="entry name" value="Transferase(Phosphotransferase) domain 1"/>
    <property type="match status" value="1"/>
</dbReference>
<dbReference type="InterPro" id="IPR050108">
    <property type="entry name" value="CDK"/>
</dbReference>
<dbReference type="InterPro" id="IPR011009">
    <property type="entry name" value="Kinase-like_dom_sf"/>
</dbReference>
<dbReference type="InterPro" id="IPR000719">
    <property type="entry name" value="Prot_kinase_dom"/>
</dbReference>
<dbReference type="InterPro" id="IPR017441">
    <property type="entry name" value="Protein_kinase_ATP_BS"/>
</dbReference>
<dbReference type="InterPro" id="IPR008271">
    <property type="entry name" value="Ser/Thr_kinase_AS"/>
</dbReference>
<dbReference type="PANTHER" id="PTHR24056">
    <property type="entry name" value="CELL DIVISION PROTEIN KINASE"/>
    <property type="match status" value="1"/>
</dbReference>
<dbReference type="PANTHER" id="PTHR24056:SF178">
    <property type="entry name" value="CYCLIN-DEPENDENT KINASE B2-2"/>
    <property type="match status" value="1"/>
</dbReference>
<dbReference type="Pfam" id="PF00069">
    <property type="entry name" value="Pkinase"/>
    <property type="match status" value="1"/>
</dbReference>
<dbReference type="SMART" id="SM00220">
    <property type="entry name" value="S_TKc"/>
    <property type="match status" value="1"/>
</dbReference>
<dbReference type="SUPFAM" id="SSF56112">
    <property type="entry name" value="Protein kinase-like (PK-like)"/>
    <property type="match status" value="1"/>
</dbReference>
<dbReference type="PROSITE" id="PS00107">
    <property type="entry name" value="PROTEIN_KINASE_ATP"/>
    <property type="match status" value="1"/>
</dbReference>
<dbReference type="PROSITE" id="PS50011">
    <property type="entry name" value="PROTEIN_KINASE_DOM"/>
    <property type="match status" value="1"/>
</dbReference>
<dbReference type="PROSITE" id="PS00108">
    <property type="entry name" value="PROTEIN_KINASE_ST"/>
    <property type="match status" value="1"/>
</dbReference>
<comment type="function">
    <text evidence="4 5">Forms a complex with CYCB2-1 or CYCB2-2 that activates CDK kinase in tobacco BY2 cells during G2/M (mitosis) phases. May be involved in the regulation of the cell cycle at the G2/M transition.</text>
</comment>
<comment type="catalytic activity">
    <reaction>
        <text>L-seryl-[protein] + ATP = O-phospho-L-seryl-[protein] + ADP + H(+)</text>
        <dbReference type="Rhea" id="RHEA:17989"/>
        <dbReference type="Rhea" id="RHEA-COMP:9863"/>
        <dbReference type="Rhea" id="RHEA-COMP:11604"/>
        <dbReference type="ChEBI" id="CHEBI:15378"/>
        <dbReference type="ChEBI" id="CHEBI:29999"/>
        <dbReference type="ChEBI" id="CHEBI:30616"/>
        <dbReference type="ChEBI" id="CHEBI:83421"/>
        <dbReference type="ChEBI" id="CHEBI:456216"/>
        <dbReference type="EC" id="2.7.11.22"/>
    </reaction>
</comment>
<comment type="catalytic activity">
    <reaction>
        <text>L-threonyl-[protein] + ATP = O-phospho-L-threonyl-[protein] + ADP + H(+)</text>
        <dbReference type="Rhea" id="RHEA:46608"/>
        <dbReference type="Rhea" id="RHEA-COMP:11060"/>
        <dbReference type="Rhea" id="RHEA-COMP:11605"/>
        <dbReference type="ChEBI" id="CHEBI:15378"/>
        <dbReference type="ChEBI" id="CHEBI:30013"/>
        <dbReference type="ChEBI" id="CHEBI:30616"/>
        <dbReference type="ChEBI" id="CHEBI:61977"/>
        <dbReference type="ChEBI" id="CHEBI:456216"/>
        <dbReference type="EC" id="2.7.11.22"/>
    </reaction>
</comment>
<comment type="catalytic activity">
    <reaction>
        <text>[DNA-directed RNA polymerase] + ATP = phospho-[DNA-directed RNA polymerase] + ADP + H(+)</text>
        <dbReference type="Rhea" id="RHEA:10216"/>
        <dbReference type="Rhea" id="RHEA-COMP:11321"/>
        <dbReference type="Rhea" id="RHEA-COMP:11322"/>
        <dbReference type="ChEBI" id="CHEBI:15378"/>
        <dbReference type="ChEBI" id="CHEBI:30616"/>
        <dbReference type="ChEBI" id="CHEBI:43176"/>
        <dbReference type="ChEBI" id="CHEBI:68546"/>
        <dbReference type="ChEBI" id="CHEBI:456216"/>
        <dbReference type="EC" id="2.7.11.23"/>
    </reaction>
</comment>
<comment type="subunit">
    <text evidence="5">Interacts with CYCB2-1 and CYCB2-2. Binding to CYCB2-1 or CYCB2-2 activates CDK kinase.</text>
</comment>
<comment type="subcellular location">
    <subcellularLocation>
        <location evidence="5">Nucleus</location>
    </subcellularLocation>
    <subcellularLocation>
        <location evidence="5">Cytoplasm</location>
        <location evidence="5">Cytoskeleton</location>
        <location evidence="5">Spindle</location>
    </subcellularLocation>
    <subcellularLocation>
        <location evidence="5">Cytoplasm</location>
        <location evidence="5">Cytoskeleton</location>
        <location evidence="5">Phragmoplast</location>
    </subcellularLocation>
    <text>Associated to mitotic spindle during metaphase, and progressively localized the phragmoplast during telophase.</text>
</comment>
<comment type="tissue specificity">
    <text evidence="4 7">Expressed in the dividing region of the root apex and the intercalary meristem of internodes.</text>
</comment>
<comment type="developmental stage">
    <text evidence="4 7">Expressed in the G2/M phases.</text>
</comment>
<comment type="induction">
    <text evidence="4 6 7">By cytokinin, gibberellin (GA3) and submergence. Down-regulated by the replication blocking agent hydroxyurea.</text>
</comment>
<comment type="similarity">
    <text evidence="8">Belongs to the protein kinase superfamily. CMGC Ser/Thr protein kinase family. CDC2/CDKX subfamily.</text>
</comment>
<comment type="sequence caution" evidence="8">
    <conflict type="erroneous initiation">
        <sequence resource="EMBL-CDS" id="BAA19553"/>
    </conflict>
</comment>
<comment type="sequence caution" evidence="8">
    <conflict type="erroneous initiation">
        <sequence resource="EMBL-CDS" id="BAD10065"/>
    </conflict>
</comment>